<gene>
    <name evidence="1" type="primary">ctaB</name>
    <name type="ordered locus">LIC_10204</name>
</gene>
<dbReference type="EC" id="2.5.1.141" evidence="1"/>
<dbReference type="EMBL" id="AE016823">
    <property type="protein sequence ID" value="AAS68832.1"/>
    <property type="molecule type" value="Genomic_DNA"/>
</dbReference>
<dbReference type="SMR" id="Q72VU2"/>
<dbReference type="KEGG" id="lic:LIC_10204"/>
<dbReference type="HOGENOM" id="CLU_029631_0_2_12"/>
<dbReference type="UniPathway" id="UPA00834">
    <property type="reaction ID" value="UER00712"/>
</dbReference>
<dbReference type="Proteomes" id="UP000007037">
    <property type="component" value="Chromosome I"/>
</dbReference>
<dbReference type="GO" id="GO:0005886">
    <property type="term" value="C:plasma membrane"/>
    <property type="evidence" value="ECO:0007669"/>
    <property type="project" value="UniProtKB-SubCell"/>
</dbReference>
<dbReference type="GO" id="GO:0008495">
    <property type="term" value="F:protoheme IX farnesyltransferase activity"/>
    <property type="evidence" value="ECO:0007669"/>
    <property type="project" value="UniProtKB-UniRule"/>
</dbReference>
<dbReference type="GO" id="GO:0048034">
    <property type="term" value="P:heme O biosynthetic process"/>
    <property type="evidence" value="ECO:0007669"/>
    <property type="project" value="UniProtKB-UniRule"/>
</dbReference>
<dbReference type="CDD" id="cd13957">
    <property type="entry name" value="PT_UbiA_Cox10"/>
    <property type="match status" value="1"/>
</dbReference>
<dbReference type="FunFam" id="1.10.357.140:FF:000006">
    <property type="entry name" value="Protoheme IX farnesyltransferase, mitochondrial"/>
    <property type="match status" value="1"/>
</dbReference>
<dbReference type="Gene3D" id="1.10.357.140">
    <property type="entry name" value="UbiA prenyltransferase"/>
    <property type="match status" value="1"/>
</dbReference>
<dbReference type="HAMAP" id="MF_00154">
    <property type="entry name" value="CyoE_CtaB"/>
    <property type="match status" value="1"/>
</dbReference>
<dbReference type="InterPro" id="IPR006369">
    <property type="entry name" value="Protohaem_IX_farnesylTrfase"/>
</dbReference>
<dbReference type="InterPro" id="IPR000537">
    <property type="entry name" value="UbiA_prenyltransferase"/>
</dbReference>
<dbReference type="InterPro" id="IPR044878">
    <property type="entry name" value="UbiA_sf"/>
</dbReference>
<dbReference type="NCBIfam" id="TIGR01473">
    <property type="entry name" value="cyoE_ctaB"/>
    <property type="match status" value="1"/>
</dbReference>
<dbReference type="NCBIfam" id="NF003349">
    <property type="entry name" value="PRK04375.1-2"/>
    <property type="match status" value="1"/>
</dbReference>
<dbReference type="PANTHER" id="PTHR43448:SF7">
    <property type="entry name" value="4-HYDROXYBENZOATE SOLANESYLTRANSFERASE"/>
    <property type="match status" value="1"/>
</dbReference>
<dbReference type="PANTHER" id="PTHR43448">
    <property type="entry name" value="PROTOHEME IX FARNESYLTRANSFERASE, MITOCHONDRIAL"/>
    <property type="match status" value="1"/>
</dbReference>
<dbReference type="Pfam" id="PF01040">
    <property type="entry name" value="UbiA"/>
    <property type="match status" value="1"/>
</dbReference>
<protein>
    <recommendedName>
        <fullName evidence="1">Protoheme IX farnesyltransferase</fullName>
        <ecNumber evidence="1">2.5.1.141</ecNumber>
    </recommendedName>
    <alternativeName>
        <fullName evidence="1">Heme B farnesyltransferase</fullName>
    </alternativeName>
    <alternativeName>
        <fullName evidence="1">Heme O synthase</fullName>
    </alternativeName>
</protein>
<feature type="chain" id="PRO_0000327070" description="Protoheme IX farnesyltransferase">
    <location>
        <begin position="1"/>
        <end position="289"/>
    </location>
</feature>
<feature type="transmembrane region" description="Helical" evidence="1">
    <location>
        <begin position="18"/>
        <end position="38"/>
    </location>
</feature>
<feature type="transmembrane region" description="Helical" evidence="1">
    <location>
        <begin position="40"/>
        <end position="60"/>
    </location>
</feature>
<feature type="transmembrane region" description="Helical" evidence="1">
    <location>
        <begin position="87"/>
        <end position="107"/>
    </location>
</feature>
<feature type="transmembrane region" description="Helical" evidence="1">
    <location>
        <begin position="111"/>
        <end position="131"/>
    </location>
</feature>
<feature type="transmembrane region" description="Helical" evidence="1">
    <location>
        <begin position="139"/>
        <end position="159"/>
    </location>
</feature>
<feature type="transmembrane region" description="Helical" evidence="1">
    <location>
        <begin position="168"/>
        <end position="188"/>
    </location>
</feature>
<feature type="transmembrane region" description="Helical" evidence="1">
    <location>
        <begin position="212"/>
        <end position="232"/>
    </location>
</feature>
<feature type="transmembrane region" description="Helical" evidence="1">
    <location>
        <begin position="234"/>
        <end position="254"/>
    </location>
</feature>
<feature type="transmembrane region" description="Helical" evidence="1">
    <location>
        <begin position="269"/>
        <end position="289"/>
    </location>
</feature>
<reference key="1">
    <citation type="journal article" date="2004" name="J. Bacteriol.">
        <title>Comparative genomics of two Leptospira interrogans serovars reveals novel insights into physiology and pathogenesis.</title>
        <authorList>
            <person name="Nascimento A.L.T.O."/>
            <person name="Ko A.I."/>
            <person name="Martins E.A.L."/>
            <person name="Monteiro-Vitorello C.B."/>
            <person name="Ho P.L."/>
            <person name="Haake D.A."/>
            <person name="Verjovski-Almeida S."/>
            <person name="Hartskeerl R.A."/>
            <person name="Marques M.V."/>
            <person name="Oliveira M.C."/>
            <person name="Menck C.F.M."/>
            <person name="Leite L.C.C."/>
            <person name="Carrer H."/>
            <person name="Coutinho L.L."/>
            <person name="Degrave W.M."/>
            <person name="Dellagostin O.A."/>
            <person name="El-Dorry H."/>
            <person name="Ferro E.S."/>
            <person name="Ferro M.I.T."/>
            <person name="Furlan L.R."/>
            <person name="Gamberini M."/>
            <person name="Giglioti E.A."/>
            <person name="Goes-Neto A."/>
            <person name="Goldman G.H."/>
            <person name="Goldman M.H.S."/>
            <person name="Harakava R."/>
            <person name="Jeronimo S.M.B."/>
            <person name="Junqueira-de-Azevedo I.L.M."/>
            <person name="Kimura E.T."/>
            <person name="Kuramae E.E."/>
            <person name="Lemos E.G.M."/>
            <person name="Lemos M.V.F."/>
            <person name="Marino C.L."/>
            <person name="Nunes L.R."/>
            <person name="de Oliveira R.C."/>
            <person name="Pereira G.G."/>
            <person name="Reis M.S."/>
            <person name="Schriefer A."/>
            <person name="Siqueira W.J."/>
            <person name="Sommer P."/>
            <person name="Tsai S.M."/>
            <person name="Simpson A.J.G."/>
            <person name="Ferro J.A."/>
            <person name="Camargo L.E.A."/>
            <person name="Kitajima J.P."/>
            <person name="Setubal J.C."/>
            <person name="Van Sluys M.A."/>
        </authorList>
    </citation>
    <scope>NUCLEOTIDE SEQUENCE [LARGE SCALE GENOMIC DNA]</scope>
    <source>
        <strain>Fiocruz L1-130</strain>
    </source>
</reference>
<proteinExistence type="inferred from homology"/>
<name>COXX_LEPIC</name>
<comment type="function">
    <text evidence="1">Converts heme B (protoheme IX) to heme O by substitution of the vinyl group on carbon 2 of heme B porphyrin ring with a hydroxyethyl farnesyl side group.</text>
</comment>
<comment type="catalytic activity">
    <reaction evidence="1">
        <text>heme b + (2E,6E)-farnesyl diphosphate + H2O = Fe(II)-heme o + diphosphate</text>
        <dbReference type="Rhea" id="RHEA:28070"/>
        <dbReference type="ChEBI" id="CHEBI:15377"/>
        <dbReference type="ChEBI" id="CHEBI:33019"/>
        <dbReference type="ChEBI" id="CHEBI:60344"/>
        <dbReference type="ChEBI" id="CHEBI:60530"/>
        <dbReference type="ChEBI" id="CHEBI:175763"/>
        <dbReference type="EC" id="2.5.1.141"/>
    </reaction>
</comment>
<comment type="pathway">
    <text evidence="1">Porphyrin-containing compound metabolism; heme O biosynthesis; heme O from protoheme: step 1/1.</text>
</comment>
<comment type="subcellular location">
    <subcellularLocation>
        <location evidence="1">Cell inner membrane</location>
        <topology evidence="1">Multi-pass membrane protein</topology>
    </subcellularLocation>
</comment>
<comment type="miscellaneous">
    <text evidence="1">Carbon 2 of the heme B porphyrin ring is defined according to the Fischer nomenclature.</text>
</comment>
<comment type="similarity">
    <text evidence="1">Belongs to the UbiA prenyltransferase family. Protoheme IX farnesyltransferase subfamily.</text>
</comment>
<keyword id="KW-0997">Cell inner membrane</keyword>
<keyword id="KW-1003">Cell membrane</keyword>
<keyword id="KW-0350">Heme biosynthesis</keyword>
<keyword id="KW-0472">Membrane</keyword>
<keyword id="KW-0808">Transferase</keyword>
<keyword id="KW-0812">Transmembrane</keyword>
<keyword id="KW-1133">Transmembrane helix</keyword>
<organism>
    <name type="scientific">Leptospira interrogans serogroup Icterohaemorrhagiae serovar copenhageni (strain Fiocruz L1-130)</name>
    <dbReference type="NCBI Taxonomy" id="267671"/>
    <lineage>
        <taxon>Bacteria</taxon>
        <taxon>Pseudomonadati</taxon>
        <taxon>Spirochaetota</taxon>
        <taxon>Spirochaetia</taxon>
        <taxon>Leptospirales</taxon>
        <taxon>Leptospiraceae</taxon>
        <taxon>Leptospira</taxon>
    </lineage>
</organism>
<evidence type="ECO:0000255" key="1">
    <source>
        <dbReference type="HAMAP-Rule" id="MF_00154"/>
    </source>
</evidence>
<accession>Q72VU2</accession>
<sequence>MASSTFFSDWNQMLKPRVTSLVLATIIPGLYLASEQSPSGFLIAITLFGTFLMSSASFIFNQVIEKDRDAKMKRTSNRPIPSGRISVVQATLVGIAMMGSSFYVLAVYVNLLTALCAFAALISYVFLYTIFLKPRTTQNIVIGGVAGCVGPLIGYAAIGNSLPVQAWSLFMMIFLWTPAHFWALAIFLKEEYSDADFPMLPVVKGIHQTTKSIFFYTILYSIACVSFYFLESSMGFLYLIVSLIVCIWMGILSYQLIQNPEPQSARKFFFFSILHLFIINITIVVDHLI</sequence>